<sequence length="232" mass="27193">MSQEKHWVMRLTWKVQEEVITKWQGIVRYWMNKRNLKWEYKMHYQITWAWYTMSRYVIPLPGSGEIHVDIYWHLAPKQGWLSTYAVGIQYVSLVNDKYRTELDPNTADSMIHCHYFTCFTDRAIQQALRGNRFIFCQFPGGHKLTGQVPSLQYLALLAHQNGLRKRSQRGETRRTRNLGSQQGAVGRMAQRYGRRNQQRSQTAFWPRTPIPSMELLSGGRGETGKTHSGKGI</sequence>
<proteinExistence type="evidence at transcript level"/>
<gene>
    <name type="primary">vif</name>
</gene>
<protein>
    <recommendedName>
        <fullName>Virion infectivity factor</fullName>
        <shortName>Vif</shortName>
    </recommendedName>
    <alternativeName>
        <fullName>Q protein</fullName>
    </alternativeName>
    <alternativeName>
        <fullName>SOR protein</fullName>
    </alternativeName>
</protein>
<evidence type="ECO:0000250" key="1"/>
<evidence type="ECO:0000256" key="2">
    <source>
        <dbReference type="SAM" id="MobiDB-lite"/>
    </source>
</evidence>
<evidence type="ECO:0000305" key="3"/>
<comment type="function">
    <text evidence="1">Counteracts the innate antiviral activity of APOBEC3G. Forms a complex with host APOBEC3G thus preventing the entry of this lethally hypermutating enzyme into progeny virions. Functions as an adapter molecule, recruiting APOBEC3G to the ubiquitin-proteasome machinery. Targets APOBEC3G for degradation through the assembly with elongin BC complex, CUL5 and RBX1. Binds viral RNA and affects the stability of viral nucleoprotein core. May play a role in viral morphology (By similarity).</text>
</comment>
<comment type="subunit">
    <text evidence="1">Homomultimer; in vitro and presumably in vivo. Interacts with viral Pr55Gag precursor and host APOBEC3G. The interaction between Vif and APOBEC3G is species-specific, which may play a role in restricting the replication of SIV to their host. Forms an E3 ligase complex by interacting with host CUL5 and elongin BC complex (ELOB and ELOC) (By similarity).</text>
</comment>
<comment type="subcellular location">
    <subcellularLocation>
        <location evidence="1">Host cytoplasm</location>
    </subcellularLocation>
    <subcellularLocation>
        <location evidence="1">Host cell membrane</location>
        <topology evidence="1">Peripheral membrane protein</topology>
        <orientation evidence="1">Cytoplasmic side</orientation>
    </subcellularLocation>
    <subcellularLocation>
        <location evidence="1">Virion</location>
    </subcellularLocation>
    <text evidence="1">Seems to colocalize with intermediate filament vimentin. A fraction is associated with the cytoplasmic side of cellular membranes, presumably via the interaction with Pr55Gag precursor (By similarity).</text>
</comment>
<comment type="induction">
    <text>Expressed late during infection in a Rev-dependent manner.</text>
</comment>
<comment type="domain">
    <text evidence="1">The BC-like-box motif mediates the interaction with elongin BC complex.</text>
</comment>
<comment type="domain">
    <text evidence="1">The HCCH motif (H-x(5)-C-x(18)-C-x(5)-H) mediates the interaction with CUL5.</text>
</comment>
<comment type="PTM">
    <text evidence="1">Processed in virion by the viral protease.</text>
</comment>
<comment type="PTM">
    <text evidence="1">Highly phosphorylated on serine and threonine residues.</text>
</comment>
<comment type="PTM">
    <text evidence="1">Polyubiquitinated and degraded by the proteasome in the presence of APOBEC3G.</text>
</comment>
<comment type="miscellaneous">
    <text>Vif-defective viruses show catastrophic failure in reverse transcription due to APOBEC-induced mutations that initiate a DNA base repair pathway and compromise the structural integrity of the ssDNA. In the absence of Vif, the virion is morphologically abnormal.</text>
</comment>
<comment type="miscellaneous">
    <text>The 155 isolate is from a monkey imported from Kenya.</text>
</comment>
<comment type="similarity">
    <text evidence="3">Belongs to the primate lentivirus group Vif protein family.</text>
</comment>
<name>VIF_SIVV1</name>
<organism>
    <name type="scientific">Simian immunodeficiency virus agm.vervet (isolate AGM155)</name>
    <name type="common">SIV-agm.ver</name>
    <name type="synonym">Simian immunodeficiency virus African green monkey vervet</name>
    <dbReference type="NCBI Taxonomy" id="11727"/>
    <lineage>
        <taxon>Viruses</taxon>
        <taxon>Riboviria</taxon>
        <taxon>Pararnavirae</taxon>
        <taxon>Artverviricota</taxon>
        <taxon>Revtraviricetes</taxon>
        <taxon>Ortervirales</taxon>
        <taxon>Retroviridae</taxon>
        <taxon>Orthoretrovirinae</taxon>
        <taxon>Lentivirus</taxon>
        <taxon>Simian immunodeficiency virus</taxon>
    </lineage>
</organism>
<reference key="1">
    <citation type="journal article" date="1990" name="J. Virol.">
        <title>Simian immunodeficiency viruses from African green monkeys display unusual genetic diversity.</title>
        <authorList>
            <person name="Johnson P.R."/>
            <person name="Fomsgaard A."/>
            <person name="Allan J.S."/>
            <person name="Gravell M."/>
            <person name="London W.T."/>
            <person name="Olmstead R.A."/>
            <person name="Hirsch V.M."/>
        </authorList>
    </citation>
    <scope>NUCLEOTIDE SEQUENCE [GENOMIC RNA]</scope>
</reference>
<organismHost>
    <name type="scientific">Cercopithecidae</name>
    <name type="common">Old World monkeys</name>
    <dbReference type="NCBI Taxonomy" id="9527"/>
</organismHost>
<dbReference type="EMBL" id="M29975">
    <property type="protein sequence ID" value="AAA91907.1"/>
    <property type="molecule type" value="Genomic_RNA"/>
</dbReference>
<dbReference type="SMR" id="P27974"/>
<dbReference type="Proteomes" id="UP000258159">
    <property type="component" value="Segment"/>
</dbReference>
<dbReference type="GO" id="GO:0030430">
    <property type="term" value="C:host cell cytoplasm"/>
    <property type="evidence" value="ECO:0007669"/>
    <property type="project" value="UniProtKB-SubCell"/>
</dbReference>
<dbReference type="GO" id="GO:0020002">
    <property type="term" value="C:host cell plasma membrane"/>
    <property type="evidence" value="ECO:0007669"/>
    <property type="project" value="UniProtKB-SubCell"/>
</dbReference>
<dbReference type="GO" id="GO:0016020">
    <property type="term" value="C:membrane"/>
    <property type="evidence" value="ECO:0007669"/>
    <property type="project" value="UniProtKB-KW"/>
</dbReference>
<dbReference type="GO" id="GO:0044423">
    <property type="term" value="C:virion component"/>
    <property type="evidence" value="ECO:0007669"/>
    <property type="project" value="UniProtKB-KW"/>
</dbReference>
<dbReference type="GO" id="GO:0019058">
    <property type="term" value="P:viral life cycle"/>
    <property type="evidence" value="ECO:0007669"/>
    <property type="project" value="InterPro"/>
</dbReference>
<dbReference type="InterPro" id="IPR000475">
    <property type="entry name" value="Vif"/>
</dbReference>
<dbReference type="Pfam" id="PF00559">
    <property type="entry name" value="Vif"/>
    <property type="match status" value="1"/>
</dbReference>
<dbReference type="PRINTS" id="PR00349">
    <property type="entry name" value="VIRIONINFFCT"/>
</dbReference>
<accession>P27974</accession>
<keyword id="KW-1032">Host cell membrane</keyword>
<keyword id="KW-1035">Host cytoplasm</keyword>
<keyword id="KW-1043">Host membrane</keyword>
<keyword id="KW-0945">Host-virus interaction</keyword>
<keyword id="KW-0472">Membrane</keyword>
<keyword id="KW-0597">Phosphoprotein</keyword>
<keyword id="KW-0832">Ubl conjugation</keyword>
<keyword id="KW-0833">Ubl conjugation pathway</keyword>
<keyword id="KW-0946">Virion</keyword>
<feature type="chain" id="PRO_0000085326" description="Virion infectivity factor">
    <location>
        <begin position="1"/>
        <end position="232"/>
    </location>
</feature>
<feature type="region of interest" description="Multimerization" evidence="1">
    <location>
        <begin position="157"/>
        <end position="172"/>
    </location>
</feature>
<feature type="region of interest" description="Disordered" evidence="2">
    <location>
        <begin position="164"/>
        <end position="232"/>
    </location>
</feature>
<feature type="short sequence motif" description="HCCH motif" evidence="1">
    <location>
        <begin position="112"/>
        <end position="142"/>
    </location>
</feature>
<feature type="short sequence motif" description="BC-box-like motif" evidence="1">
    <location>
        <begin position="150"/>
        <end position="159"/>
    </location>
</feature>
<feature type="modified residue" description="Phosphothreonine; by host" evidence="1">
    <location>
        <position position="100"/>
    </location>
</feature>
<feature type="modified residue" description="Phosphoserine; by host" evidence="1">
    <location>
        <position position="150"/>
    </location>
</feature>